<feature type="chain" id="PRO_0000103937" description="Uncharacterized protein Mb2031c">
    <location>
        <begin position="1"/>
        <end position="441"/>
    </location>
</feature>
<feature type="binding site" evidence="1">
    <location>
        <begin position="78"/>
        <end position="85"/>
    </location>
    <ligand>
        <name>ATP</name>
        <dbReference type="ChEBI" id="CHEBI:30616"/>
    </ligand>
</feature>
<proteinExistence type="predicted"/>
<evidence type="ECO:0000255" key="1"/>
<gene>
    <name type="ordered locus">BQ2027_MB2031C</name>
</gene>
<keyword id="KW-0067">ATP-binding</keyword>
<keyword id="KW-0547">Nucleotide-binding</keyword>
<keyword id="KW-1185">Reference proteome</keyword>
<name>Y2031_MYCBO</name>
<sequence>MDEIESLIGLRPTPLTWPVVIAGDFLGVWDPPPSLPGAANHEISAPTARISCMLIERRDAAARLRRALHRAPVVLLTGPRQAGKTTLSRLVGKSAPECTFDAENPVDATRLADPMLALSGLSGLITIDEAQRIPDLFPVLRVLVDRPVMPARFLILGSASPDLVGLASESLAGRVELVELSGLTVRDVGSSAADRLWLRGGLPPSFTARSNEDSAAWRDGYITTFLERDLAQLGVRIPAATMRRAWTMLAHYHGQLFSGAELARSLDVAQTTARRYLDALTDALVVRQLTPWFANIGKRQRRSPKIYIRDTGLLHRLLGIDDRLALERNPKLGASWEGFVLEQLAALLAPNPLYYWRTQQDAELDLYVELSGRPYGFEIKRTSTPSISRSMRSALVDLQLARLAIVYPGEHRFPLSDTVVAVPADQILTTGSVDELLALLK</sequence>
<organism>
    <name type="scientific">Mycobacterium bovis (strain ATCC BAA-935 / AF2122/97)</name>
    <dbReference type="NCBI Taxonomy" id="233413"/>
    <lineage>
        <taxon>Bacteria</taxon>
        <taxon>Bacillati</taxon>
        <taxon>Actinomycetota</taxon>
        <taxon>Actinomycetes</taxon>
        <taxon>Mycobacteriales</taxon>
        <taxon>Mycobacteriaceae</taxon>
        <taxon>Mycobacterium</taxon>
        <taxon>Mycobacterium tuberculosis complex</taxon>
    </lineage>
</organism>
<dbReference type="EMBL" id="LT708304">
    <property type="protein sequence ID" value="SIU00638.1"/>
    <property type="molecule type" value="Genomic_DNA"/>
</dbReference>
<dbReference type="RefSeq" id="NP_855681.1">
    <property type="nucleotide sequence ID" value="NC_002945.3"/>
</dbReference>
<dbReference type="KEGG" id="mbo:BQ2027_MB2031C"/>
<dbReference type="PATRIC" id="fig|233413.5.peg.2231"/>
<dbReference type="Proteomes" id="UP000001419">
    <property type="component" value="Chromosome"/>
</dbReference>
<dbReference type="GO" id="GO:0005524">
    <property type="term" value="F:ATP binding"/>
    <property type="evidence" value="ECO:0007669"/>
    <property type="project" value="UniProtKB-KW"/>
</dbReference>
<dbReference type="Gene3D" id="3.40.50.300">
    <property type="entry name" value="P-loop containing nucleotide triphosphate hydrolases"/>
    <property type="match status" value="1"/>
</dbReference>
<dbReference type="InterPro" id="IPR041682">
    <property type="entry name" value="AAA_14"/>
</dbReference>
<dbReference type="InterPro" id="IPR025420">
    <property type="entry name" value="DUF4143"/>
</dbReference>
<dbReference type="InterPro" id="IPR027417">
    <property type="entry name" value="P-loop_NTPase"/>
</dbReference>
<dbReference type="PANTHER" id="PTHR43566">
    <property type="entry name" value="CONSERVED PROTEIN"/>
    <property type="match status" value="1"/>
</dbReference>
<dbReference type="PANTHER" id="PTHR43566:SF2">
    <property type="entry name" value="DUF4143 DOMAIN-CONTAINING PROTEIN"/>
    <property type="match status" value="1"/>
</dbReference>
<dbReference type="Pfam" id="PF13173">
    <property type="entry name" value="AAA_14"/>
    <property type="match status" value="1"/>
</dbReference>
<dbReference type="Pfam" id="PF13635">
    <property type="entry name" value="DUF4143"/>
    <property type="match status" value="1"/>
</dbReference>
<dbReference type="SUPFAM" id="SSF52540">
    <property type="entry name" value="P-loop containing nucleoside triphosphate hydrolases"/>
    <property type="match status" value="1"/>
</dbReference>
<protein>
    <recommendedName>
        <fullName>Uncharacterized protein Mb2031c</fullName>
    </recommendedName>
</protein>
<accession>P64924</accession>
<accession>A0A1R3XZW8</accession>
<accession>Q10849</accession>
<accession>X2BJU6</accession>
<reference key="1">
    <citation type="journal article" date="2003" name="Proc. Natl. Acad. Sci. U.S.A.">
        <title>The complete genome sequence of Mycobacterium bovis.</title>
        <authorList>
            <person name="Garnier T."/>
            <person name="Eiglmeier K."/>
            <person name="Camus J.-C."/>
            <person name="Medina N."/>
            <person name="Mansoor H."/>
            <person name="Pryor M."/>
            <person name="Duthoy S."/>
            <person name="Grondin S."/>
            <person name="Lacroix C."/>
            <person name="Monsempe C."/>
            <person name="Simon S."/>
            <person name="Harris B."/>
            <person name="Atkin R."/>
            <person name="Doggett J."/>
            <person name="Mayes R."/>
            <person name="Keating L."/>
            <person name="Wheeler P.R."/>
            <person name="Parkhill J."/>
            <person name="Barrell B.G."/>
            <person name="Cole S.T."/>
            <person name="Gordon S.V."/>
            <person name="Hewinson R.G."/>
        </authorList>
    </citation>
    <scope>NUCLEOTIDE SEQUENCE [LARGE SCALE GENOMIC DNA]</scope>
    <source>
        <strain>ATCC BAA-935 / AF2122/97</strain>
    </source>
</reference>
<reference key="2">
    <citation type="journal article" date="2017" name="Genome Announc.">
        <title>Updated reference genome sequence and annotation of Mycobacterium bovis AF2122/97.</title>
        <authorList>
            <person name="Malone K.M."/>
            <person name="Farrell D."/>
            <person name="Stuber T.P."/>
            <person name="Schubert O.T."/>
            <person name="Aebersold R."/>
            <person name="Robbe-Austerman S."/>
            <person name="Gordon S.V."/>
        </authorList>
    </citation>
    <scope>NUCLEOTIDE SEQUENCE [LARGE SCALE GENOMIC DNA]</scope>
    <scope>GENOME REANNOTATION</scope>
    <source>
        <strain>ATCC BAA-935 / AF2122/97</strain>
    </source>
</reference>